<proteinExistence type="inferred from homology"/>
<name>SLX1_CANDC</name>
<sequence>MSQTNDKPALHLVPSFYGVYILKSIPKPRRTYIGSTPDPKRRLRQHNGDLKVGGAYRTKKDGSRPWTMVVLVHGFPSRIAALQFEHSLQHAYQTRHINNDARITSSSRQSSMHSKLANIRLLTTSFDKMSLKIAIFDEEVYRMWVENKHKIECNVPCTLFKFDEFCNSIQEIDIEDAKNILLGKQLDCMVCKASIDYFKDSTPNISSREELSNYLAKGNYPLIGICGDHAFHLSCIARQRGPAMVPKSVTCTTCGQKLDWSDIIKVSTRLRHYVVQDSLHLAITQL</sequence>
<protein>
    <recommendedName>
        <fullName evidence="1">Structure-specific endonuclease subunit SLX1</fullName>
        <ecNumber evidence="1">3.1.-.-</ecNumber>
    </recommendedName>
</protein>
<accession>B9WGW9</accession>
<reference key="1">
    <citation type="journal article" date="2009" name="Genome Res.">
        <title>Comparative genomics of the fungal pathogens Candida dubliniensis and Candida albicans.</title>
        <authorList>
            <person name="Jackson A.P."/>
            <person name="Gamble J.A."/>
            <person name="Yeomans T."/>
            <person name="Moran G.P."/>
            <person name="Saunders D."/>
            <person name="Harris D."/>
            <person name="Aslett M."/>
            <person name="Barrell J.F."/>
            <person name="Butler G."/>
            <person name="Citiulo F."/>
            <person name="Coleman D.C."/>
            <person name="de Groot P.W.J."/>
            <person name="Goodwin T.J."/>
            <person name="Quail M.A."/>
            <person name="McQuillan J."/>
            <person name="Munro C.A."/>
            <person name="Pain A."/>
            <person name="Poulter R.T."/>
            <person name="Rajandream M.A."/>
            <person name="Renauld H."/>
            <person name="Spiering M.J."/>
            <person name="Tivey A."/>
            <person name="Gow N.A.R."/>
            <person name="Barrell B."/>
            <person name="Sullivan D.J."/>
            <person name="Berriman M."/>
        </authorList>
    </citation>
    <scope>NUCLEOTIDE SEQUENCE [LARGE SCALE GENOMIC DNA]</scope>
    <source>
        <strain>CD36 / ATCC MYA-646 / CBS 7987 / NCPF 3949 / NRRL Y-17841</strain>
    </source>
</reference>
<dbReference type="EC" id="3.1.-.-" evidence="1"/>
<dbReference type="EMBL" id="FM992692">
    <property type="protein sequence ID" value="CAX41407.1"/>
    <property type="molecule type" value="Genomic_DNA"/>
</dbReference>
<dbReference type="RefSeq" id="XP_002420332.1">
    <property type="nucleotide sequence ID" value="XM_002420287.1"/>
</dbReference>
<dbReference type="SMR" id="B9WGW9"/>
<dbReference type="GeneID" id="8048304"/>
<dbReference type="KEGG" id="cdu:CD36_50260"/>
<dbReference type="CGD" id="CAL0000167864">
    <property type="gene designation" value="Cd36_50260"/>
</dbReference>
<dbReference type="VEuPathDB" id="FungiDB:CD36_50260"/>
<dbReference type="eggNOG" id="KOG3005">
    <property type="taxonomic scope" value="Eukaryota"/>
</dbReference>
<dbReference type="HOGENOM" id="CLU_030739_1_1_1"/>
<dbReference type="OrthoDB" id="24645at2759"/>
<dbReference type="Proteomes" id="UP000002605">
    <property type="component" value="Chromosome 5"/>
</dbReference>
<dbReference type="GO" id="GO:0033557">
    <property type="term" value="C:Slx1-Slx4 complex"/>
    <property type="evidence" value="ECO:0007669"/>
    <property type="project" value="UniProtKB-UniRule"/>
</dbReference>
<dbReference type="GO" id="GO:0017108">
    <property type="term" value="F:5'-flap endonuclease activity"/>
    <property type="evidence" value="ECO:0007669"/>
    <property type="project" value="InterPro"/>
</dbReference>
<dbReference type="GO" id="GO:0008821">
    <property type="term" value="F:crossover junction DNA endonuclease activity"/>
    <property type="evidence" value="ECO:0007669"/>
    <property type="project" value="TreeGrafter"/>
</dbReference>
<dbReference type="GO" id="GO:0000724">
    <property type="term" value="P:double-strand break repair via homologous recombination"/>
    <property type="evidence" value="ECO:0007669"/>
    <property type="project" value="TreeGrafter"/>
</dbReference>
<dbReference type="CDD" id="cd10455">
    <property type="entry name" value="GIY-YIG_SLX1"/>
    <property type="match status" value="1"/>
</dbReference>
<dbReference type="Gene3D" id="3.40.1440.10">
    <property type="entry name" value="GIY-YIG endonuclease"/>
    <property type="match status" value="1"/>
</dbReference>
<dbReference type="Gene3D" id="3.30.40.10">
    <property type="entry name" value="Zinc/RING finger domain, C3HC4 (zinc finger)"/>
    <property type="match status" value="1"/>
</dbReference>
<dbReference type="HAMAP" id="MF_03100">
    <property type="entry name" value="Endonuc_su_Slx1"/>
    <property type="match status" value="1"/>
</dbReference>
<dbReference type="InterPro" id="IPR000305">
    <property type="entry name" value="GIY-YIG_endonuc"/>
</dbReference>
<dbReference type="InterPro" id="IPR035901">
    <property type="entry name" value="GIY-YIG_endonuc_sf"/>
</dbReference>
<dbReference type="InterPro" id="IPR027520">
    <property type="entry name" value="Slx1"/>
</dbReference>
<dbReference type="InterPro" id="IPR050381">
    <property type="entry name" value="SLX1_endonuclease"/>
</dbReference>
<dbReference type="InterPro" id="IPR013083">
    <property type="entry name" value="Znf_RING/FYVE/PHD"/>
</dbReference>
<dbReference type="PANTHER" id="PTHR20208">
    <property type="entry name" value="STRUCTURE-SPECIFIC ENDONUCLEASE SUBUNIT SLX1"/>
    <property type="match status" value="1"/>
</dbReference>
<dbReference type="PANTHER" id="PTHR20208:SF10">
    <property type="entry name" value="STRUCTURE-SPECIFIC ENDONUCLEASE SUBUNIT SLX1"/>
    <property type="match status" value="1"/>
</dbReference>
<dbReference type="Pfam" id="PF01541">
    <property type="entry name" value="GIY-YIG"/>
    <property type="match status" value="1"/>
</dbReference>
<dbReference type="SUPFAM" id="SSF82771">
    <property type="entry name" value="GIY-YIG endonuclease"/>
    <property type="match status" value="1"/>
</dbReference>
<dbReference type="SUPFAM" id="SSF57850">
    <property type="entry name" value="RING/U-box"/>
    <property type="match status" value="1"/>
</dbReference>
<dbReference type="PROSITE" id="PS50164">
    <property type="entry name" value="GIY_YIG"/>
    <property type="match status" value="1"/>
</dbReference>
<gene>
    <name evidence="1" type="primary">SLX1</name>
    <name type="ORF">CD36_50260</name>
</gene>
<keyword id="KW-0227">DNA damage</keyword>
<keyword id="KW-0233">DNA recombination</keyword>
<keyword id="KW-0234">DNA repair</keyword>
<keyword id="KW-0255">Endonuclease</keyword>
<keyword id="KW-0378">Hydrolase</keyword>
<keyword id="KW-0540">Nuclease</keyword>
<keyword id="KW-0539">Nucleus</keyword>
<comment type="function">
    <text evidence="1">Catalytic subunit of the SLX1-SLX4 structure-specific endonuclease that resolves DNA secondary structures generated during DNA repair and recombination. Has endonuclease activity towards branched DNA substrates, introducing single-strand cuts in duplex DNA close to junctions with ss-DNA.</text>
</comment>
<comment type="cofactor">
    <cofactor evidence="1">
        <name>a divalent metal cation</name>
        <dbReference type="ChEBI" id="CHEBI:60240"/>
    </cofactor>
</comment>
<comment type="subunit">
    <text evidence="1">Forms a heterodimer with SLX4.</text>
</comment>
<comment type="subcellular location">
    <subcellularLocation>
        <location evidence="1">Nucleus</location>
    </subcellularLocation>
</comment>
<comment type="similarity">
    <text evidence="1">Belongs to the SLX1 family.</text>
</comment>
<organism>
    <name type="scientific">Candida dubliniensis (strain CD36 / ATCC MYA-646 / CBS 7987 / NCPF 3949 / NRRL Y-17841)</name>
    <name type="common">Yeast</name>
    <dbReference type="NCBI Taxonomy" id="573826"/>
    <lineage>
        <taxon>Eukaryota</taxon>
        <taxon>Fungi</taxon>
        <taxon>Dikarya</taxon>
        <taxon>Ascomycota</taxon>
        <taxon>Saccharomycotina</taxon>
        <taxon>Pichiomycetes</taxon>
        <taxon>Debaryomycetaceae</taxon>
        <taxon>Candida/Lodderomyces clade</taxon>
        <taxon>Candida</taxon>
    </lineage>
</organism>
<feature type="chain" id="PRO_0000383779" description="Structure-specific endonuclease subunit SLX1">
    <location>
        <begin position="1"/>
        <end position="286"/>
    </location>
</feature>
<feature type="domain" description="GIY-YIG" evidence="1">
    <location>
        <begin position="15"/>
        <end position="98"/>
    </location>
</feature>
<evidence type="ECO:0000255" key="1">
    <source>
        <dbReference type="HAMAP-Rule" id="MF_03100"/>
    </source>
</evidence>